<keyword id="KW-0256">Endoplasmic reticulum</keyword>
<keyword id="KW-0349">Heme</keyword>
<keyword id="KW-0408">Iron</keyword>
<keyword id="KW-0472">Membrane</keyword>
<keyword id="KW-0479">Metal-binding</keyword>
<keyword id="KW-0503">Monooxygenase</keyword>
<keyword id="KW-0560">Oxidoreductase</keyword>
<keyword id="KW-1185">Reference proteome</keyword>
<keyword id="KW-0735">Signal-anchor</keyword>
<keyword id="KW-0812">Transmembrane</keyword>
<keyword id="KW-1133">Transmembrane helix</keyword>
<dbReference type="EC" id="1.14.-.-"/>
<dbReference type="EMBL" id="AF069716">
    <property type="status" value="NOT_ANNOTATED_CDS"/>
    <property type="molecule type" value="Genomic_DNA"/>
</dbReference>
<dbReference type="EMBL" id="CP002688">
    <property type="protein sequence ID" value="AED93376.1"/>
    <property type="molecule type" value="Genomic_DNA"/>
</dbReference>
<dbReference type="EMBL" id="BT011240">
    <property type="protein sequence ID" value="AAR92276.1"/>
    <property type="molecule type" value="mRNA"/>
</dbReference>
<dbReference type="EMBL" id="BT012545">
    <property type="protein sequence ID" value="AAS99689.1"/>
    <property type="molecule type" value="mRNA"/>
</dbReference>
<dbReference type="EMBL" id="AK227205">
    <property type="protein sequence ID" value="BAE99244.1"/>
    <property type="molecule type" value="mRNA"/>
</dbReference>
<dbReference type="RefSeq" id="NP_197872.1">
    <property type="nucleotide sequence ID" value="NM_122399.3"/>
</dbReference>
<dbReference type="SMR" id="Q6NKZ8"/>
<dbReference type="FunCoup" id="Q6NKZ8">
    <property type="interactions" value="312"/>
</dbReference>
<dbReference type="STRING" id="3702.Q6NKZ8"/>
<dbReference type="iPTMnet" id="Q6NKZ8"/>
<dbReference type="PaxDb" id="3702-AT5G24900.1"/>
<dbReference type="ProteomicsDB" id="239108"/>
<dbReference type="EnsemblPlants" id="AT5G24900.1">
    <property type="protein sequence ID" value="AT5G24900.1"/>
    <property type="gene ID" value="AT5G24900"/>
</dbReference>
<dbReference type="GeneID" id="832559"/>
<dbReference type="Gramene" id="AT5G24900.1">
    <property type="protein sequence ID" value="AT5G24900.1"/>
    <property type="gene ID" value="AT5G24900"/>
</dbReference>
<dbReference type="KEGG" id="ath:AT5G24900"/>
<dbReference type="Araport" id="AT5G24900"/>
<dbReference type="TAIR" id="AT5G24900">
    <property type="gene designation" value="CYP714A2"/>
</dbReference>
<dbReference type="eggNOG" id="KOG0157">
    <property type="taxonomic scope" value="Eukaryota"/>
</dbReference>
<dbReference type="HOGENOM" id="CLU_001570_5_0_1"/>
<dbReference type="InParanoid" id="Q6NKZ8"/>
<dbReference type="OMA" id="IDVQKWM"/>
<dbReference type="PhylomeDB" id="Q6NKZ8"/>
<dbReference type="BioCyc" id="ARA:AT5G24900-MONOMER"/>
<dbReference type="PRO" id="PR:Q6NKZ8"/>
<dbReference type="Proteomes" id="UP000006548">
    <property type="component" value="Chromosome 5"/>
</dbReference>
<dbReference type="ExpressionAtlas" id="Q6NKZ8">
    <property type="expression patterns" value="baseline and differential"/>
</dbReference>
<dbReference type="GO" id="GO:0005789">
    <property type="term" value="C:endoplasmic reticulum membrane"/>
    <property type="evidence" value="ECO:0007669"/>
    <property type="project" value="UniProtKB-SubCell"/>
</dbReference>
<dbReference type="GO" id="GO:0020037">
    <property type="term" value="F:heme binding"/>
    <property type="evidence" value="ECO:0007669"/>
    <property type="project" value="InterPro"/>
</dbReference>
<dbReference type="GO" id="GO:0005506">
    <property type="term" value="F:iron ion binding"/>
    <property type="evidence" value="ECO:0007669"/>
    <property type="project" value="InterPro"/>
</dbReference>
<dbReference type="GO" id="GO:0004497">
    <property type="term" value="F:monooxygenase activity"/>
    <property type="evidence" value="ECO:0007669"/>
    <property type="project" value="UniProtKB-KW"/>
</dbReference>
<dbReference type="GO" id="GO:0016705">
    <property type="term" value="F:oxidoreductase activity, acting on paired donors, with incorporation or reduction of molecular oxygen"/>
    <property type="evidence" value="ECO:0007669"/>
    <property type="project" value="InterPro"/>
</dbReference>
<dbReference type="CDD" id="cd20640">
    <property type="entry name" value="CYP714"/>
    <property type="match status" value="1"/>
</dbReference>
<dbReference type="Gene3D" id="1.10.630.10">
    <property type="entry name" value="Cytochrome P450"/>
    <property type="match status" value="1"/>
</dbReference>
<dbReference type="InterPro" id="IPR001128">
    <property type="entry name" value="Cyt_P450"/>
</dbReference>
<dbReference type="InterPro" id="IPR017972">
    <property type="entry name" value="Cyt_P450_CS"/>
</dbReference>
<dbReference type="InterPro" id="IPR002401">
    <property type="entry name" value="Cyt_P450_E_grp-I"/>
</dbReference>
<dbReference type="InterPro" id="IPR036396">
    <property type="entry name" value="Cyt_P450_sf"/>
</dbReference>
<dbReference type="InterPro" id="IPR050665">
    <property type="entry name" value="Cytochrome_P450_Monooxygen"/>
</dbReference>
<dbReference type="PANTHER" id="PTHR24282:SF36">
    <property type="entry name" value="CYTOCHROME P450 714A1-RELATED"/>
    <property type="match status" value="1"/>
</dbReference>
<dbReference type="PANTHER" id="PTHR24282">
    <property type="entry name" value="CYTOCHROME P450 FAMILY MEMBER"/>
    <property type="match status" value="1"/>
</dbReference>
<dbReference type="Pfam" id="PF00067">
    <property type="entry name" value="p450"/>
    <property type="match status" value="1"/>
</dbReference>
<dbReference type="PRINTS" id="PR00463">
    <property type="entry name" value="EP450I"/>
</dbReference>
<dbReference type="PRINTS" id="PR00385">
    <property type="entry name" value="P450"/>
</dbReference>
<dbReference type="SUPFAM" id="SSF48264">
    <property type="entry name" value="Cytochrome P450"/>
    <property type="match status" value="1"/>
</dbReference>
<dbReference type="PROSITE" id="PS00086">
    <property type="entry name" value="CYTOCHROME_P450"/>
    <property type="match status" value="1"/>
</dbReference>
<proteinExistence type="evidence at transcript level"/>
<protein>
    <recommendedName>
        <fullName>Cytochrome P450 714A2</fullName>
        <ecNumber>1.14.-.-</ecNumber>
    </recommendedName>
    <alternativeName>
        <fullName>EUI-like P450 A2</fullName>
    </alternativeName>
</protein>
<comment type="function">
    <text evidence="3">Involved in the inactivation of early gibberellin (GA) intermediates.</text>
</comment>
<comment type="cofactor">
    <cofactor evidence="1">
        <name>heme</name>
        <dbReference type="ChEBI" id="CHEBI:30413"/>
    </cofactor>
</comment>
<comment type="subcellular location">
    <subcellularLocation>
        <location evidence="5">Endoplasmic reticulum membrane</location>
        <topology evidence="5">Single-pass type III membrane protein</topology>
    </subcellularLocation>
</comment>
<comment type="tissue specificity">
    <text evidence="3">Expressed in the shoot apical meristem (SAM) and petioles of young leaves, in the leaf margin and petiole vein of cotyledons, and at low levels in the filaments of developing flowers. Not detected in siliques.</text>
</comment>
<comment type="disruption phenotype">
    <text evidence="3">No visible phenotype; due to the redundancy with CYP714A1. Cyp714a1 and cyp714a2 double mutants flower earlier and have an increased plant size and biomass.</text>
</comment>
<comment type="miscellaneous">
    <text evidence="5">Overexpression of CYP714A2 causes severe dwarfism with defective leaf development.</text>
</comment>
<comment type="similarity">
    <text evidence="4">Belongs to the cytochrome P450 family.</text>
</comment>
<sequence length="525" mass="59334">MESLVVHTVNAIWCIVIVGIFSVGYHVYGRAVVEQWRMRRSLKLQGVKGPPPSIFNGNVSEMQRIQSEAKHCSGDNIISHDYSSSLFPHFDHWRKQYGRIYTYSTGLKQHLYINHPEMVKELSQTNTLNLGRITHITKRLNPILGNGIITSNGPHWAHQRRIIAYEFTHDKIKGMVGLMVESAMPMLNKWEEMVKRGGEMGCDIRVDEDLKDVSADVIAKACFGSSFSKGKAIFSMIRDLLTAITKRSVLFRFNGFTDMVFGSKKHGDVDIDALEMELESSIWETVKEREIECKDTHKKDLMQLILEGAMRSCDGNLWDKSAYRRFVVDNCKSIYFAGHDSTAVSVSWCLMLLALNPSWQVKIRDEILSSCKNGIPDAESIPNLKTVTMVIQETMRLYPPAPIVGREASKDIRLGDLVVPKGVCIWTLIPALHRDPEIWGPDANDFKPERFSEGISKACKYPQSYIPFGLGPRTCVGKNFGMMEVKVLVSLIVSKFSFTLSPTYQHSPSHKLLVEPQHGVVIRVV</sequence>
<gene>
    <name type="primary">CYP714A2</name>
    <name type="synonym">ELA2</name>
    <name type="ordered locus">At5g24900</name>
    <name type="ORF">F6A4.110</name>
</gene>
<accession>Q6NKZ8</accession>
<evidence type="ECO:0000250" key="1"/>
<evidence type="ECO:0000255" key="2"/>
<evidence type="ECO:0000269" key="3">
    <source>
    </source>
</evidence>
<evidence type="ECO:0000305" key="4"/>
<evidence type="ECO:0000305" key="5">
    <source>
    </source>
</evidence>
<organism>
    <name type="scientific">Arabidopsis thaliana</name>
    <name type="common">Mouse-ear cress</name>
    <dbReference type="NCBI Taxonomy" id="3702"/>
    <lineage>
        <taxon>Eukaryota</taxon>
        <taxon>Viridiplantae</taxon>
        <taxon>Streptophyta</taxon>
        <taxon>Embryophyta</taxon>
        <taxon>Tracheophyta</taxon>
        <taxon>Spermatophyta</taxon>
        <taxon>Magnoliopsida</taxon>
        <taxon>eudicotyledons</taxon>
        <taxon>Gunneridae</taxon>
        <taxon>Pentapetalae</taxon>
        <taxon>rosids</taxon>
        <taxon>malvids</taxon>
        <taxon>Brassicales</taxon>
        <taxon>Brassicaceae</taxon>
        <taxon>Camelineae</taxon>
        <taxon>Arabidopsis</taxon>
    </lineage>
</organism>
<reference key="1">
    <citation type="journal article" date="2000" name="Nature">
        <title>Sequence and analysis of chromosome 5 of the plant Arabidopsis thaliana.</title>
        <authorList>
            <person name="Tabata S."/>
            <person name="Kaneko T."/>
            <person name="Nakamura Y."/>
            <person name="Kotani H."/>
            <person name="Kato T."/>
            <person name="Asamizu E."/>
            <person name="Miyajima N."/>
            <person name="Sasamoto S."/>
            <person name="Kimura T."/>
            <person name="Hosouchi T."/>
            <person name="Kawashima K."/>
            <person name="Kohara M."/>
            <person name="Matsumoto M."/>
            <person name="Matsuno A."/>
            <person name="Muraki A."/>
            <person name="Nakayama S."/>
            <person name="Nakazaki N."/>
            <person name="Naruo K."/>
            <person name="Okumura S."/>
            <person name="Shinpo S."/>
            <person name="Takeuchi C."/>
            <person name="Wada T."/>
            <person name="Watanabe A."/>
            <person name="Yamada M."/>
            <person name="Yasuda M."/>
            <person name="Sato S."/>
            <person name="de la Bastide M."/>
            <person name="Huang E."/>
            <person name="Spiegel L."/>
            <person name="Gnoj L."/>
            <person name="O'Shaughnessy A."/>
            <person name="Preston R."/>
            <person name="Habermann K."/>
            <person name="Murray J."/>
            <person name="Johnson D."/>
            <person name="Rohlfing T."/>
            <person name="Nelson J."/>
            <person name="Stoneking T."/>
            <person name="Pepin K."/>
            <person name="Spieth J."/>
            <person name="Sekhon M."/>
            <person name="Armstrong J."/>
            <person name="Becker M."/>
            <person name="Belter E."/>
            <person name="Cordum H."/>
            <person name="Cordes M."/>
            <person name="Courtney L."/>
            <person name="Courtney W."/>
            <person name="Dante M."/>
            <person name="Du H."/>
            <person name="Edwards J."/>
            <person name="Fryman J."/>
            <person name="Haakensen B."/>
            <person name="Lamar E."/>
            <person name="Latreille P."/>
            <person name="Leonard S."/>
            <person name="Meyer R."/>
            <person name="Mulvaney E."/>
            <person name="Ozersky P."/>
            <person name="Riley A."/>
            <person name="Strowmatt C."/>
            <person name="Wagner-McPherson C."/>
            <person name="Wollam A."/>
            <person name="Yoakum M."/>
            <person name="Bell M."/>
            <person name="Dedhia N."/>
            <person name="Parnell L."/>
            <person name="Shah R."/>
            <person name="Rodriguez M."/>
            <person name="Hoon See L."/>
            <person name="Vil D."/>
            <person name="Baker J."/>
            <person name="Kirchoff K."/>
            <person name="Toth K."/>
            <person name="King L."/>
            <person name="Bahret A."/>
            <person name="Miller B."/>
            <person name="Marra M.A."/>
            <person name="Martienssen R."/>
            <person name="McCombie W.R."/>
            <person name="Wilson R.K."/>
            <person name="Murphy G."/>
            <person name="Bancroft I."/>
            <person name="Volckaert G."/>
            <person name="Wambutt R."/>
            <person name="Duesterhoeft A."/>
            <person name="Stiekema W."/>
            <person name="Pohl T."/>
            <person name="Entian K.-D."/>
            <person name="Terryn N."/>
            <person name="Hartley N."/>
            <person name="Bent E."/>
            <person name="Johnson S."/>
            <person name="Langham S.-A."/>
            <person name="McCullagh B."/>
            <person name="Robben J."/>
            <person name="Grymonprez B."/>
            <person name="Zimmermann W."/>
            <person name="Ramsperger U."/>
            <person name="Wedler H."/>
            <person name="Balke K."/>
            <person name="Wedler E."/>
            <person name="Peters S."/>
            <person name="van Staveren M."/>
            <person name="Dirkse W."/>
            <person name="Mooijman P."/>
            <person name="Klein Lankhorst R."/>
            <person name="Weitzenegger T."/>
            <person name="Bothe G."/>
            <person name="Rose M."/>
            <person name="Hauf J."/>
            <person name="Berneiser S."/>
            <person name="Hempel S."/>
            <person name="Feldpausch M."/>
            <person name="Lamberth S."/>
            <person name="Villarroel R."/>
            <person name="Gielen J."/>
            <person name="Ardiles W."/>
            <person name="Bents O."/>
            <person name="Lemcke K."/>
            <person name="Kolesov G."/>
            <person name="Mayer K.F.X."/>
            <person name="Rudd S."/>
            <person name="Schoof H."/>
            <person name="Schueller C."/>
            <person name="Zaccaria P."/>
            <person name="Mewes H.-W."/>
            <person name="Bevan M."/>
            <person name="Fransz P.F."/>
        </authorList>
    </citation>
    <scope>NUCLEOTIDE SEQUENCE [LARGE SCALE GENOMIC DNA]</scope>
    <source>
        <strain>cv. Columbia</strain>
    </source>
</reference>
<reference key="2">
    <citation type="journal article" date="2017" name="Plant J.">
        <title>Araport11: a complete reannotation of the Arabidopsis thaliana reference genome.</title>
        <authorList>
            <person name="Cheng C.Y."/>
            <person name="Krishnakumar V."/>
            <person name="Chan A.P."/>
            <person name="Thibaud-Nissen F."/>
            <person name="Schobel S."/>
            <person name="Town C.D."/>
        </authorList>
    </citation>
    <scope>GENOME REANNOTATION</scope>
    <source>
        <strain>cv. Columbia</strain>
    </source>
</reference>
<reference key="3">
    <citation type="submission" date="2004-04" db="EMBL/GenBank/DDBJ databases">
        <title>Arabidopsis ORF clones.</title>
        <authorList>
            <person name="Kim C.J."/>
            <person name="Chen H."/>
            <person name="Cheuk R."/>
            <person name="Shinn P."/>
            <person name="Ecker J.R."/>
        </authorList>
    </citation>
    <scope>NUCLEOTIDE SEQUENCE [LARGE SCALE MRNA]</scope>
</reference>
<reference key="4">
    <citation type="submission" date="2006-07" db="EMBL/GenBank/DDBJ databases">
        <title>Large-scale analysis of RIKEN Arabidopsis full-length (RAFL) cDNAs.</title>
        <authorList>
            <person name="Totoki Y."/>
            <person name="Seki M."/>
            <person name="Ishida J."/>
            <person name="Nakajima M."/>
            <person name="Enju A."/>
            <person name="Kamiya A."/>
            <person name="Narusaka M."/>
            <person name="Shin-i T."/>
            <person name="Nakagawa M."/>
            <person name="Sakamoto N."/>
            <person name="Oishi K."/>
            <person name="Kohara Y."/>
            <person name="Kobayashi M."/>
            <person name="Toyoda A."/>
            <person name="Sakaki Y."/>
            <person name="Sakurai T."/>
            <person name="Iida K."/>
            <person name="Akiyama K."/>
            <person name="Satou M."/>
            <person name="Toyoda T."/>
            <person name="Konagaya A."/>
            <person name="Carninci P."/>
            <person name="Kawai J."/>
            <person name="Hayashizaki Y."/>
            <person name="Shinozaki K."/>
        </authorList>
    </citation>
    <scope>NUCLEOTIDE SEQUENCE [LARGE SCALE MRNA]</scope>
    <source>
        <strain>cv. Columbia</strain>
    </source>
</reference>
<reference key="5">
    <citation type="journal article" date="2011" name="Plant J.">
        <title>Two Arabidopsis cytochrome P450 monooxygenases, CYP714A1 and CYP714A2, function redundantly in plant development through gibberellin deactivation.</title>
        <authorList>
            <person name="Zhang Y."/>
            <person name="Zhang B."/>
            <person name="Yan D."/>
            <person name="Dong W."/>
            <person name="Yang W."/>
            <person name="Li Q."/>
            <person name="Zeng L."/>
            <person name="Wang J."/>
            <person name="Wang L."/>
            <person name="Hicks L.M."/>
            <person name="He Z."/>
        </authorList>
    </citation>
    <scope>FUNCTION</scope>
    <scope>DISRUPTION PHENOTYPE</scope>
    <scope>TISSUE SPECIFICITY</scope>
    <scope>SUBCELLULAR LOCATION</scope>
</reference>
<feature type="chain" id="PRO_0000422411" description="Cytochrome P450 714A2">
    <location>
        <begin position="1"/>
        <end position="525"/>
    </location>
</feature>
<feature type="topological domain" description="Lumenal" evidence="2">
    <location>
        <begin position="1"/>
        <end position="3"/>
    </location>
</feature>
<feature type="transmembrane region" description="Helical; Signal-anchor for type III membrane protein" evidence="2">
    <location>
        <begin position="4"/>
        <end position="24"/>
    </location>
</feature>
<feature type="topological domain" description="Cytoplasmic" evidence="2">
    <location>
        <begin position="25"/>
        <end position="525"/>
    </location>
</feature>
<feature type="binding site" description="axial binding residue" evidence="1">
    <location>
        <position position="475"/>
    </location>
    <ligand>
        <name>heme</name>
        <dbReference type="ChEBI" id="CHEBI:30413"/>
    </ligand>
    <ligandPart>
        <name>Fe</name>
        <dbReference type="ChEBI" id="CHEBI:18248"/>
    </ligandPart>
</feature>
<name>C14A2_ARATH</name>